<gene>
    <name evidence="1" type="primary">nagB</name>
    <name type="ordered locus">Teth39_0992</name>
</gene>
<sequence length="253" mass="28372">MKVIITVNYEEMSKKAAEIVKKQIKEKPNTVLGLATGSTPLGMYKHLIEMYKRGEIDFSNVITFNLDEYIGLSPDHPQSYHYFMFHNFFNHINIKKENVHIPNGIAEDLEEECRKYEEEIEKAGGIDLQILGIGINGHIGFNEPDESIETKTHVVTLTEKTINANKRFFKSAEEVPRKAITMGLGSIMKAKKIVLLASGKNKAEAIKETIKGQLTTKVPATVLALHPDVTIIIDKEAASLIPDEDLKEIEVIV</sequence>
<dbReference type="EC" id="3.5.99.6" evidence="1"/>
<dbReference type="EMBL" id="CP000924">
    <property type="protein sequence ID" value="ABY94647.1"/>
    <property type="molecule type" value="Genomic_DNA"/>
</dbReference>
<dbReference type="RefSeq" id="WP_012269265.1">
    <property type="nucleotide sequence ID" value="NC_010321.1"/>
</dbReference>
<dbReference type="SMR" id="B0K934"/>
<dbReference type="STRING" id="340099.Teth39_0992"/>
<dbReference type="KEGG" id="tpd:Teth39_0992"/>
<dbReference type="eggNOG" id="COG0363">
    <property type="taxonomic scope" value="Bacteria"/>
</dbReference>
<dbReference type="HOGENOM" id="CLU_049611_1_1_9"/>
<dbReference type="UniPathway" id="UPA00629">
    <property type="reaction ID" value="UER00684"/>
</dbReference>
<dbReference type="Proteomes" id="UP000002156">
    <property type="component" value="Chromosome"/>
</dbReference>
<dbReference type="GO" id="GO:0005737">
    <property type="term" value="C:cytoplasm"/>
    <property type="evidence" value="ECO:0007669"/>
    <property type="project" value="TreeGrafter"/>
</dbReference>
<dbReference type="GO" id="GO:0004342">
    <property type="term" value="F:glucosamine-6-phosphate deaminase activity"/>
    <property type="evidence" value="ECO:0007669"/>
    <property type="project" value="UniProtKB-UniRule"/>
</dbReference>
<dbReference type="GO" id="GO:0042802">
    <property type="term" value="F:identical protein binding"/>
    <property type="evidence" value="ECO:0007669"/>
    <property type="project" value="TreeGrafter"/>
</dbReference>
<dbReference type="GO" id="GO:0005975">
    <property type="term" value="P:carbohydrate metabolic process"/>
    <property type="evidence" value="ECO:0007669"/>
    <property type="project" value="InterPro"/>
</dbReference>
<dbReference type="GO" id="GO:0006043">
    <property type="term" value="P:glucosamine catabolic process"/>
    <property type="evidence" value="ECO:0007669"/>
    <property type="project" value="TreeGrafter"/>
</dbReference>
<dbReference type="GO" id="GO:0006046">
    <property type="term" value="P:N-acetylglucosamine catabolic process"/>
    <property type="evidence" value="ECO:0007669"/>
    <property type="project" value="TreeGrafter"/>
</dbReference>
<dbReference type="GO" id="GO:0019262">
    <property type="term" value="P:N-acetylneuraminate catabolic process"/>
    <property type="evidence" value="ECO:0007669"/>
    <property type="project" value="UniProtKB-UniRule"/>
</dbReference>
<dbReference type="CDD" id="cd01399">
    <property type="entry name" value="GlcN6P_deaminase"/>
    <property type="match status" value="1"/>
</dbReference>
<dbReference type="FunFam" id="3.40.50.1360:FF:000003">
    <property type="entry name" value="Glucosamine-6-phosphate deaminase"/>
    <property type="match status" value="1"/>
</dbReference>
<dbReference type="Gene3D" id="3.40.50.1360">
    <property type="match status" value="1"/>
</dbReference>
<dbReference type="HAMAP" id="MF_01241">
    <property type="entry name" value="GlcN6P_deamin"/>
    <property type="match status" value="1"/>
</dbReference>
<dbReference type="InterPro" id="IPR006148">
    <property type="entry name" value="Glc/Gal-6P_isomerase"/>
</dbReference>
<dbReference type="InterPro" id="IPR004547">
    <property type="entry name" value="Glucosamine6P_isomerase"/>
</dbReference>
<dbReference type="InterPro" id="IPR018321">
    <property type="entry name" value="Glucosamine6P_isomerase_CS"/>
</dbReference>
<dbReference type="InterPro" id="IPR037171">
    <property type="entry name" value="NagB/RpiA_transferase-like"/>
</dbReference>
<dbReference type="NCBIfam" id="TIGR00502">
    <property type="entry name" value="nagB"/>
    <property type="match status" value="1"/>
</dbReference>
<dbReference type="NCBIfam" id="NF001684">
    <property type="entry name" value="PRK00443.1-4"/>
    <property type="match status" value="1"/>
</dbReference>
<dbReference type="PANTHER" id="PTHR11280">
    <property type="entry name" value="GLUCOSAMINE-6-PHOSPHATE ISOMERASE"/>
    <property type="match status" value="1"/>
</dbReference>
<dbReference type="PANTHER" id="PTHR11280:SF5">
    <property type="entry name" value="GLUCOSAMINE-6-PHOSPHATE ISOMERASE"/>
    <property type="match status" value="1"/>
</dbReference>
<dbReference type="Pfam" id="PF01182">
    <property type="entry name" value="Glucosamine_iso"/>
    <property type="match status" value="1"/>
</dbReference>
<dbReference type="SUPFAM" id="SSF100950">
    <property type="entry name" value="NagB/RpiA/CoA transferase-like"/>
    <property type="match status" value="1"/>
</dbReference>
<dbReference type="PROSITE" id="PS01161">
    <property type="entry name" value="GLC_GALNAC_ISOMERASE"/>
    <property type="match status" value="1"/>
</dbReference>
<feature type="chain" id="PRO_1000139798" description="Glucosamine-6-phosphate deaminase">
    <location>
        <begin position="1"/>
        <end position="253"/>
    </location>
</feature>
<feature type="active site" description="Proton acceptor; for enolization step" evidence="1">
    <location>
        <position position="67"/>
    </location>
</feature>
<feature type="active site" description="For ring-opening step" evidence="1">
    <location>
        <position position="136"/>
    </location>
</feature>
<feature type="active site" description="Proton acceptor; for ring-opening step" evidence="1">
    <location>
        <position position="138"/>
    </location>
</feature>
<feature type="active site" description="For ring-opening step" evidence="1">
    <location>
        <position position="143"/>
    </location>
</feature>
<proteinExistence type="inferred from homology"/>
<evidence type="ECO:0000255" key="1">
    <source>
        <dbReference type="HAMAP-Rule" id="MF_01241"/>
    </source>
</evidence>
<organism>
    <name type="scientific">Thermoanaerobacter pseudethanolicus (strain ATCC 33223 / 39E)</name>
    <name type="common">Clostridium thermohydrosulfuricum</name>
    <dbReference type="NCBI Taxonomy" id="340099"/>
    <lineage>
        <taxon>Bacteria</taxon>
        <taxon>Bacillati</taxon>
        <taxon>Bacillota</taxon>
        <taxon>Clostridia</taxon>
        <taxon>Thermoanaerobacterales</taxon>
        <taxon>Thermoanaerobacteraceae</taxon>
        <taxon>Thermoanaerobacter</taxon>
    </lineage>
</organism>
<protein>
    <recommendedName>
        <fullName evidence="1">Glucosamine-6-phosphate deaminase</fullName>
        <ecNumber evidence="1">3.5.99.6</ecNumber>
    </recommendedName>
    <alternativeName>
        <fullName evidence="1">GlcN6P deaminase</fullName>
        <shortName evidence="1">GNPDA</shortName>
    </alternativeName>
    <alternativeName>
        <fullName evidence="1">Glucosamine-6-phosphate isomerase</fullName>
    </alternativeName>
</protein>
<keyword id="KW-0119">Carbohydrate metabolism</keyword>
<keyword id="KW-0378">Hydrolase</keyword>
<keyword id="KW-1185">Reference proteome</keyword>
<name>NAGB_THEP3</name>
<reference key="1">
    <citation type="submission" date="2008-01" db="EMBL/GenBank/DDBJ databases">
        <title>Complete sequence of Thermoanaerobacter pseudethanolicus 39E.</title>
        <authorList>
            <person name="Copeland A."/>
            <person name="Lucas S."/>
            <person name="Lapidus A."/>
            <person name="Barry K."/>
            <person name="Glavina del Rio T."/>
            <person name="Dalin E."/>
            <person name="Tice H."/>
            <person name="Pitluck S."/>
            <person name="Bruce D."/>
            <person name="Goodwin L."/>
            <person name="Saunders E."/>
            <person name="Brettin T."/>
            <person name="Detter J.C."/>
            <person name="Han C."/>
            <person name="Schmutz J."/>
            <person name="Larimer F."/>
            <person name="Land M."/>
            <person name="Hauser L."/>
            <person name="Kyrpides N."/>
            <person name="Lykidis A."/>
            <person name="Hemme C."/>
            <person name="Fields M.W."/>
            <person name="He Z."/>
            <person name="Zhou J."/>
            <person name="Richardson P."/>
        </authorList>
    </citation>
    <scope>NUCLEOTIDE SEQUENCE [LARGE SCALE GENOMIC DNA]</scope>
    <source>
        <strain>ATCC 33223 / DSM 2355 / 39E</strain>
    </source>
</reference>
<comment type="function">
    <text evidence="1">Catalyzes the reversible isomerization-deamination of glucosamine 6-phosphate (GlcN6P) to form fructose 6-phosphate (Fru6P) and ammonium ion.</text>
</comment>
<comment type="catalytic activity">
    <reaction evidence="1">
        <text>alpha-D-glucosamine 6-phosphate + H2O = beta-D-fructose 6-phosphate + NH4(+)</text>
        <dbReference type="Rhea" id="RHEA:12172"/>
        <dbReference type="ChEBI" id="CHEBI:15377"/>
        <dbReference type="ChEBI" id="CHEBI:28938"/>
        <dbReference type="ChEBI" id="CHEBI:57634"/>
        <dbReference type="ChEBI" id="CHEBI:75989"/>
        <dbReference type="EC" id="3.5.99.6"/>
    </reaction>
</comment>
<comment type="pathway">
    <text evidence="1">Amino-sugar metabolism; N-acetylneuraminate degradation; D-fructose 6-phosphate from N-acetylneuraminate: step 5/5.</text>
</comment>
<comment type="similarity">
    <text evidence="1">Belongs to the glucosamine/galactosamine-6-phosphate isomerase family. NagB subfamily.</text>
</comment>
<accession>B0K934</accession>